<dbReference type="EMBL" id="AM115671">
    <property type="protein sequence ID" value="CAJ40982.1"/>
    <property type="molecule type" value="mRNA"/>
</dbReference>
<dbReference type="GO" id="GO:0005576">
    <property type="term" value="C:extracellular region"/>
    <property type="evidence" value="ECO:0007669"/>
    <property type="project" value="UniProtKB-SubCell"/>
</dbReference>
<dbReference type="InterPro" id="IPR018070">
    <property type="entry name" value="Neuromedin-U_amidation-site"/>
</dbReference>
<dbReference type="InterPro" id="IPR043253">
    <property type="entry name" value="NmS"/>
</dbReference>
<dbReference type="PANTHER" id="PTHR32414">
    <property type="entry name" value="NEUROMEDIN-S"/>
    <property type="match status" value="1"/>
</dbReference>
<dbReference type="PANTHER" id="PTHR32414:SF2">
    <property type="entry name" value="NEUROMEDIN-S"/>
    <property type="match status" value="1"/>
</dbReference>
<dbReference type="PROSITE" id="PS00967">
    <property type="entry name" value="NMU"/>
    <property type="match status" value="1"/>
</dbReference>
<accession>Q1HA14</accession>
<reference key="1">
    <citation type="journal article" date="2006" name="Biochem. Biophys. Res. Commun.">
        <title>Structural and functional analogs of the novel mammalian neuropeptide, neuromedin S (NmS), in the dermal venoms of Eurasian bombinid toads.</title>
        <authorList>
            <person name="Chen T."/>
            <person name="Zhou M."/>
            <person name="Walker B."/>
            <person name="Harriot P."/>
            <person name="Mori K."/>
            <person name="Miyazato M."/>
            <person name="Kangawa K."/>
            <person name="Shaw C."/>
        </authorList>
    </citation>
    <scope>NUCLEOTIDE SEQUENCE [MRNA]</scope>
    <scope>PROTEIN SEQUENCE OF 103-119</scope>
    <scope>SUBCELLULAR LOCATION</scope>
    <scope>TISSUE SPECIFICITY</scope>
    <scope>MASS SPECTROMETRY</scope>
    <scope>AMIDATION AT ASN-119</scope>
    <source>
        <tissue>Skin secretion</tissue>
    </source>
</reference>
<gene>
    <name type="primary">nms</name>
</gene>
<organism>
    <name type="scientific">Bombina variegata</name>
    <name type="common">Yellow-bellied toad</name>
    <dbReference type="NCBI Taxonomy" id="8348"/>
    <lineage>
        <taxon>Eukaryota</taxon>
        <taxon>Metazoa</taxon>
        <taxon>Chordata</taxon>
        <taxon>Craniata</taxon>
        <taxon>Vertebrata</taxon>
        <taxon>Euteleostomi</taxon>
        <taxon>Amphibia</taxon>
        <taxon>Batrachia</taxon>
        <taxon>Anura</taxon>
        <taxon>Bombinatoridae</taxon>
        <taxon>Bombina</taxon>
    </lineage>
</organism>
<protein>
    <recommendedName>
        <fullName>Neuromedin-S</fullName>
    </recommendedName>
    <component>
        <recommendedName>
            <fullName>Neuromedin-S-17</fullName>
            <shortName>NmS-17</shortName>
        </recommendedName>
    </component>
</protein>
<sequence length="128" mass="14586">MRSEKHLLPLPPLLAICCLGTLHLSSGFPQSVPSYLEGLDIPESEIPSFVMDLCSSIYNRMKVNEENNHEIYKRFLFQFSRAKDPSLKIGESQIATAEYTKRDSSGIVGRPFFLFRPRNGRKVSINEH</sequence>
<name>NMS_BOMVA</name>
<feature type="signal peptide" evidence="1">
    <location>
        <begin position="1"/>
        <end position="27"/>
    </location>
</feature>
<feature type="propeptide" id="PRO_0000417376">
    <location>
        <begin position="28"/>
        <end position="72"/>
    </location>
</feature>
<feature type="propeptide" id="PRO_0000417377">
    <location>
        <begin position="75"/>
        <end position="100"/>
    </location>
</feature>
<feature type="peptide" id="PRO_5000076903" description="Neuromedin-S-17">
    <location>
        <begin position="103"/>
        <end position="119"/>
    </location>
</feature>
<feature type="propeptide" id="PRO_0000417378">
    <location>
        <begin position="123"/>
        <end position="128"/>
    </location>
</feature>
<feature type="modified residue" description="Asparagine amide" evidence="2">
    <location>
        <position position="119"/>
    </location>
</feature>
<proteinExistence type="evidence at protein level"/>
<evidence type="ECO:0000255" key="1"/>
<evidence type="ECO:0000269" key="2">
    <source>
    </source>
</evidence>
<evidence type="ECO:0000305" key="3"/>
<keyword id="KW-0027">Amidation</keyword>
<keyword id="KW-0903">Direct protein sequencing</keyword>
<keyword id="KW-0964">Secreted</keyword>
<keyword id="KW-0732">Signal</keyword>
<comment type="function">
    <text>Neuromedin-S-17: stimulates uterine smooth muscle contraction (B similarity). Synthetic peptide NmS-17 induces calcium mobilization in CHO cells transfected with either human FM-3/GPR66 (EC(50)=0.085 nM) or FM-4/TGR-1 (EC(50)=0.231 nM) NmU/NmS receptors.</text>
</comment>
<comment type="subcellular location">
    <subcellularLocation>
        <location evidence="2">Secreted</location>
    </subcellularLocation>
</comment>
<comment type="tissue specificity">
    <text evidence="2">Expressed by the skin glands.</text>
</comment>
<comment type="mass spectrometry" mass="1964.0" method="Electrospray" evidence="2">
    <text>Non-protonated fragment.</text>
</comment>
<comment type="similarity">
    <text evidence="3">Belongs to the NmU family.</text>
</comment>